<keyword id="KW-0067">ATP-binding</keyword>
<keyword id="KW-0418">Kinase</keyword>
<keyword id="KW-0460">Magnesium</keyword>
<keyword id="KW-0479">Metal-binding</keyword>
<keyword id="KW-0547">Nucleotide-binding</keyword>
<keyword id="KW-1185">Reference proteome</keyword>
<keyword id="KW-0784">Thiamine biosynthesis</keyword>
<keyword id="KW-0808">Transferase</keyword>
<accession>P76423</accession>
<accession>Q9S6P4</accession>
<name>THIM_ECOLI</name>
<comment type="function">
    <text evidence="1 2">Catalyzes the phosphorylation of the hydroxyl group of 4-methyl-5-beta-hydroxyethylthiazole (THZ).</text>
</comment>
<comment type="catalytic activity">
    <reaction evidence="1 2">
        <text>5-(2-hydroxyethyl)-4-methylthiazole + ATP = 4-methyl-5-(2-phosphooxyethyl)-thiazole + ADP + H(+)</text>
        <dbReference type="Rhea" id="RHEA:24212"/>
        <dbReference type="ChEBI" id="CHEBI:15378"/>
        <dbReference type="ChEBI" id="CHEBI:17957"/>
        <dbReference type="ChEBI" id="CHEBI:30616"/>
        <dbReference type="ChEBI" id="CHEBI:58296"/>
        <dbReference type="ChEBI" id="CHEBI:456216"/>
        <dbReference type="EC" id="2.7.1.50"/>
    </reaction>
</comment>
<comment type="cofactor">
    <cofactor evidence="1">
        <name>Mg(2+)</name>
        <dbReference type="ChEBI" id="CHEBI:18420"/>
    </cofactor>
</comment>
<comment type="pathway">
    <text evidence="1 2">Cofactor biosynthesis; thiamine diphosphate biosynthesis; 4-methyl-5-(2-phosphoethyl)-thiazole from 5-(2-hydroxyethyl)-4-methylthiazole: step 1/1.</text>
</comment>
<comment type="similarity">
    <text evidence="1">Belongs to the Thz kinase family.</text>
</comment>
<evidence type="ECO:0000255" key="1">
    <source>
        <dbReference type="HAMAP-Rule" id="MF_00228"/>
    </source>
</evidence>
<evidence type="ECO:0000269" key="2">
    <source>
    </source>
</evidence>
<feature type="chain" id="PRO_0000156933" description="Hydroxyethylthiazole kinase">
    <location>
        <begin position="1"/>
        <end position="262"/>
    </location>
</feature>
<feature type="binding site" evidence="1">
    <location>
        <position position="50"/>
    </location>
    <ligand>
        <name>substrate</name>
    </ligand>
</feature>
<feature type="binding site" evidence="1">
    <location>
        <position position="125"/>
    </location>
    <ligand>
        <name>ATP</name>
        <dbReference type="ChEBI" id="CHEBI:30616"/>
    </ligand>
</feature>
<feature type="binding site" evidence="1">
    <location>
        <position position="171"/>
    </location>
    <ligand>
        <name>ATP</name>
        <dbReference type="ChEBI" id="CHEBI:30616"/>
    </ligand>
</feature>
<feature type="binding site" evidence="1">
    <location>
        <position position="198"/>
    </location>
    <ligand>
        <name>substrate</name>
    </ligand>
</feature>
<sequence>MQVDLLGSAQSAHALHLFHQHSPLVHCMTNDVVQTFTANTLLALGASPAMVIETEEASQFAAIASALLINVGTLTQPRAQAMRAAVEQAKSSQTPWTLDPVAVGALDYRRHFCHELLSFKPAAIRGNASEIMALAGIANGGRGVDTTDAAANAIPAAQTLARETGAIVVVTGEMDYVTDGHRIIGIHGGDPLMTKVVGTGCALSAVVAACCALPGDTLENVASACHWMKQAGERAVARSEGPGSFVPHFLDALWQLTQEVQA</sequence>
<gene>
    <name evidence="1" type="primary">thiM</name>
    <name type="ordered locus">b2104</name>
    <name type="ordered locus">JW2091</name>
</gene>
<organism>
    <name type="scientific">Escherichia coli (strain K12)</name>
    <dbReference type="NCBI Taxonomy" id="83333"/>
    <lineage>
        <taxon>Bacteria</taxon>
        <taxon>Pseudomonadati</taxon>
        <taxon>Pseudomonadota</taxon>
        <taxon>Gammaproteobacteria</taxon>
        <taxon>Enterobacterales</taxon>
        <taxon>Enterobacteriaceae</taxon>
        <taxon>Escherichia</taxon>
    </lineage>
</organism>
<proteinExistence type="evidence at protein level"/>
<dbReference type="EC" id="2.7.1.50" evidence="1"/>
<dbReference type="EMBL" id="U00096">
    <property type="protein sequence ID" value="AAC75165.1"/>
    <property type="molecule type" value="Genomic_DNA"/>
</dbReference>
<dbReference type="EMBL" id="AP009048">
    <property type="protein sequence ID" value="BAA15972.1"/>
    <property type="molecule type" value="Genomic_DNA"/>
</dbReference>
<dbReference type="EMBL" id="D88442">
    <property type="protein sequence ID" value="BAA76743.1"/>
    <property type="molecule type" value="Genomic_DNA"/>
</dbReference>
<dbReference type="PIR" id="G64977">
    <property type="entry name" value="G64977"/>
</dbReference>
<dbReference type="RefSeq" id="NP_416607.1">
    <property type="nucleotide sequence ID" value="NC_000913.3"/>
</dbReference>
<dbReference type="RefSeq" id="WP_001195564.1">
    <property type="nucleotide sequence ID" value="NZ_SSZK01000011.1"/>
</dbReference>
<dbReference type="SMR" id="P76423"/>
<dbReference type="BioGRID" id="4261165">
    <property type="interactions" value="309"/>
</dbReference>
<dbReference type="FunCoup" id="P76423">
    <property type="interactions" value="295"/>
</dbReference>
<dbReference type="IntAct" id="P76423">
    <property type="interactions" value="2"/>
</dbReference>
<dbReference type="STRING" id="511145.b2104"/>
<dbReference type="PaxDb" id="511145-b2104"/>
<dbReference type="EnsemblBacteria" id="AAC75165">
    <property type="protein sequence ID" value="AAC75165"/>
    <property type="gene ID" value="b2104"/>
</dbReference>
<dbReference type="GeneID" id="945142"/>
<dbReference type="KEGG" id="ecj:JW2091"/>
<dbReference type="KEGG" id="eco:b2104"/>
<dbReference type="KEGG" id="ecoc:C3026_11805"/>
<dbReference type="PATRIC" id="fig|1411691.4.peg.143"/>
<dbReference type="EchoBASE" id="EB3822"/>
<dbReference type="eggNOG" id="COG2145">
    <property type="taxonomic scope" value="Bacteria"/>
</dbReference>
<dbReference type="HOGENOM" id="CLU_019943_0_1_6"/>
<dbReference type="InParanoid" id="P76423"/>
<dbReference type="OMA" id="KRPLVHN"/>
<dbReference type="OrthoDB" id="8909021at2"/>
<dbReference type="PhylomeDB" id="P76423"/>
<dbReference type="BioCyc" id="EcoCyc:THZ-KIN-MONOMER"/>
<dbReference type="BioCyc" id="MetaCyc:THZ-KIN-MONOMER"/>
<dbReference type="BRENDA" id="2.7.1.50">
    <property type="organism ID" value="2026"/>
</dbReference>
<dbReference type="UniPathway" id="UPA00060">
    <property type="reaction ID" value="UER00139"/>
</dbReference>
<dbReference type="PRO" id="PR:P76423"/>
<dbReference type="Proteomes" id="UP000000625">
    <property type="component" value="Chromosome"/>
</dbReference>
<dbReference type="GO" id="GO:0005829">
    <property type="term" value="C:cytosol"/>
    <property type="evidence" value="ECO:0000314"/>
    <property type="project" value="EcoCyc"/>
</dbReference>
<dbReference type="GO" id="GO:0005524">
    <property type="term" value="F:ATP binding"/>
    <property type="evidence" value="ECO:0007669"/>
    <property type="project" value="UniProtKB-UniRule"/>
</dbReference>
<dbReference type="GO" id="GO:0004417">
    <property type="term" value="F:hydroxyethylthiazole kinase activity"/>
    <property type="evidence" value="ECO:0000314"/>
    <property type="project" value="EcoCyc"/>
</dbReference>
<dbReference type="GO" id="GO:0042802">
    <property type="term" value="F:identical protein binding"/>
    <property type="evidence" value="ECO:0000314"/>
    <property type="project" value="EcoCyc"/>
</dbReference>
<dbReference type="GO" id="GO:0000287">
    <property type="term" value="F:magnesium ion binding"/>
    <property type="evidence" value="ECO:0007669"/>
    <property type="project" value="UniProtKB-UniRule"/>
</dbReference>
<dbReference type="GO" id="GO:0052673">
    <property type="term" value="F:prenol kinase activity"/>
    <property type="evidence" value="ECO:0000314"/>
    <property type="project" value="EcoCyc"/>
</dbReference>
<dbReference type="GO" id="GO:0009229">
    <property type="term" value="P:thiamine diphosphate biosynthetic process"/>
    <property type="evidence" value="ECO:0007669"/>
    <property type="project" value="UniProtKB-UniRule"/>
</dbReference>
<dbReference type="GO" id="GO:0036172">
    <property type="term" value="P:thiamine salvage"/>
    <property type="evidence" value="ECO:0000315"/>
    <property type="project" value="EcoCyc"/>
</dbReference>
<dbReference type="CDD" id="cd01170">
    <property type="entry name" value="THZ_kinase"/>
    <property type="match status" value="1"/>
</dbReference>
<dbReference type="FunFam" id="3.40.1190.20:FF:000015">
    <property type="entry name" value="Hydroxyethylthiazole kinase"/>
    <property type="match status" value="1"/>
</dbReference>
<dbReference type="Gene3D" id="3.40.1190.20">
    <property type="match status" value="1"/>
</dbReference>
<dbReference type="HAMAP" id="MF_00228">
    <property type="entry name" value="Thz_kinase"/>
    <property type="match status" value="1"/>
</dbReference>
<dbReference type="InterPro" id="IPR000417">
    <property type="entry name" value="Hyethyz_kinase"/>
</dbReference>
<dbReference type="InterPro" id="IPR029056">
    <property type="entry name" value="Ribokinase-like"/>
</dbReference>
<dbReference type="NCBIfam" id="NF006830">
    <property type="entry name" value="PRK09355.1"/>
    <property type="match status" value="1"/>
</dbReference>
<dbReference type="NCBIfam" id="TIGR00694">
    <property type="entry name" value="thiM"/>
    <property type="match status" value="1"/>
</dbReference>
<dbReference type="Pfam" id="PF02110">
    <property type="entry name" value="HK"/>
    <property type="match status" value="1"/>
</dbReference>
<dbReference type="PIRSF" id="PIRSF000513">
    <property type="entry name" value="Thz_kinase"/>
    <property type="match status" value="1"/>
</dbReference>
<dbReference type="PRINTS" id="PR01099">
    <property type="entry name" value="HYETHTZKNASE"/>
</dbReference>
<dbReference type="SUPFAM" id="SSF53613">
    <property type="entry name" value="Ribokinase-like"/>
    <property type="match status" value="1"/>
</dbReference>
<reference key="1">
    <citation type="journal article" date="1996" name="DNA Res.">
        <title>A 460-kb DNA sequence of the Escherichia coli K-12 genome corresponding to the 40.1-50.0 min region on the linkage map.</title>
        <authorList>
            <person name="Itoh T."/>
            <person name="Aiba H."/>
            <person name="Baba T."/>
            <person name="Fujita K."/>
            <person name="Hayashi K."/>
            <person name="Inada T."/>
            <person name="Isono K."/>
            <person name="Kasai H."/>
            <person name="Kimura S."/>
            <person name="Kitakawa M."/>
            <person name="Kitagawa M."/>
            <person name="Makino K."/>
            <person name="Miki T."/>
            <person name="Mizobuchi K."/>
            <person name="Mori H."/>
            <person name="Mori T."/>
            <person name="Motomura K."/>
            <person name="Nakade S."/>
            <person name="Nakamura Y."/>
            <person name="Nashimoto H."/>
            <person name="Nishio Y."/>
            <person name="Oshima T."/>
            <person name="Saito N."/>
            <person name="Sampei G."/>
            <person name="Seki Y."/>
            <person name="Sivasundaram S."/>
            <person name="Tagami H."/>
            <person name="Takeda J."/>
            <person name="Takemoto K."/>
            <person name="Wada C."/>
            <person name="Yamamoto Y."/>
            <person name="Horiuchi T."/>
        </authorList>
    </citation>
    <scope>NUCLEOTIDE SEQUENCE [LARGE SCALE GENOMIC DNA]</scope>
    <source>
        <strain>K12 / W3110 / ATCC 27325 / DSM 5911</strain>
    </source>
</reference>
<reference key="2">
    <citation type="journal article" date="1997" name="Science">
        <title>The complete genome sequence of Escherichia coli K-12.</title>
        <authorList>
            <person name="Blattner F.R."/>
            <person name="Plunkett G. III"/>
            <person name="Bloch C.A."/>
            <person name="Perna N.T."/>
            <person name="Burland V."/>
            <person name="Riley M."/>
            <person name="Collado-Vides J."/>
            <person name="Glasner J.D."/>
            <person name="Rode C.K."/>
            <person name="Mayhew G.F."/>
            <person name="Gregor J."/>
            <person name="Davis N.W."/>
            <person name="Kirkpatrick H.A."/>
            <person name="Goeden M.A."/>
            <person name="Rose D.J."/>
            <person name="Mau B."/>
            <person name="Shao Y."/>
        </authorList>
    </citation>
    <scope>NUCLEOTIDE SEQUENCE [LARGE SCALE GENOMIC DNA]</scope>
    <source>
        <strain>K12 / MG1655 / ATCC 47076</strain>
    </source>
</reference>
<reference key="3">
    <citation type="journal article" date="2006" name="Mol. Syst. Biol.">
        <title>Highly accurate genome sequences of Escherichia coli K-12 strains MG1655 and W3110.</title>
        <authorList>
            <person name="Hayashi K."/>
            <person name="Morooka N."/>
            <person name="Yamamoto Y."/>
            <person name="Fujita K."/>
            <person name="Isono K."/>
            <person name="Choi S."/>
            <person name="Ohtsubo E."/>
            <person name="Baba T."/>
            <person name="Wanner B.L."/>
            <person name="Mori H."/>
            <person name="Horiuchi T."/>
        </authorList>
    </citation>
    <scope>NUCLEOTIDE SEQUENCE [LARGE SCALE GENOMIC DNA]</scope>
    <source>
        <strain>K12 / W3110 / ATCC 27325 / DSM 5911</strain>
    </source>
</reference>
<reference key="4">
    <citation type="journal article" date="1999" name="Microbiology">
        <title>Cloning and characterization of the thiD/J gene of Escherichia coli encoding a thiamin-synthesizing bifunctional enzyme, hydroxymethylpyrimidine kinase/phosphomethylpyrimidine kinase.</title>
        <authorList>
            <person name="Mizote T."/>
            <person name="Tsuda M."/>
            <person name="Smith D.D.S."/>
            <person name="Nakayama H."/>
            <person name="Nakazawa T."/>
        </authorList>
    </citation>
    <scope>NUCLEOTIDE SEQUENCE [GENOMIC DNA] OF 28-262</scope>
    <source>
        <strain>K12</strain>
    </source>
</reference>
<reference key="5">
    <citation type="journal article" date="1989" name="J. Bacteriol.">
        <title>The thiM locus and its relation to phosphorylation of hydroxyethylthiazole in Escherichia coli.</title>
        <authorList>
            <person name="Mizote T."/>
            <person name="Nakayama H."/>
        </authorList>
    </citation>
    <scope>FUNCTION</scope>
    <scope>CATALYTIC ACTIVITY</scope>
    <scope>PATHWAY</scope>
    <scope>GENE NAME</scope>
    <source>
        <strain>K12</strain>
    </source>
</reference>
<protein>
    <recommendedName>
        <fullName evidence="1">Hydroxyethylthiazole kinase</fullName>
        <ecNumber evidence="1">2.7.1.50</ecNumber>
    </recommendedName>
    <alternativeName>
        <fullName evidence="1">4-methyl-5-beta-hydroxyethylthiazole kinase</fullName>
        <shortName evidence="1">TH kinase</shortName>
        <shortName evidence="1">Thz kinase</shortName>
    </alternativeName>
</protein>